<feature type="chain" id="PRO_0000129532" description="Large ribosomal subunit protein uL2">
    <location>
        <begin position="1"/>
        <end position="275"/>
    </location>
</feature>
<feature type="region of interest" description="Disordered" evidence="2">
    <location>
        <begin position="38"/>
        <end position="59"/>
    </location>
</feature>
<feature type="region of interest" description="Disordered" evidence="2">
    <location>
        <begin position="223"/>
        <end position="275"/>
    </location>
</feature>
<feature type="compositionally biased region" description="Basic residues" evidence="2">
    <location>
        <begin position="50"/>
        <end position="59"/>
    </location>
</feature>
<feature type="compositionally biased region" description="Basic and acidic residues" evidence="2">
    <location>
        <begin position="229"/>
        <end position="244"/>
    </location>
</feature>
<keyword id="KW-0687">Ribonucleoprotein</keyword>
<keyword id="KW-0689">Ribosomal protein</keyword>
<keyword id="KW-0694">RNA-binding</keyword>
<keyword id="KW-0699">rRNA-binding</keyword>
<accession>Q7WRC2</accession>
<evidence type="ECO:0000255" key="1">
    <source>
        <dbReference type="HAMAP-Rule" id="MF_01320"/>
    </source>
</evidence>
<evidence type="ECO:0000256" key="2">
    <source>
        <dbReference type="SAM" id="MobiDB-lite"/>
    </source>
</evidence>
<evidence type="ECO:0000305" key="3"/>
<reference key="1">
    <citation type="journal article" date="2003" name="Nat. Genet.">
        <title>Comparative analysis of the genome sequences of Bordetella pertussis, Bordetella parapertussis and Bordetella bronchiseptica.</title>
        <authorList>
            <person name="Parkhill J."/>
            <person name="Sebaihia M."/>
            <person name="Preston A."/>
            <person name="Murphy L.D."/>
            <person name="Thomson N.R."/>
            <person name="Harris D.E."/>
            <person name="Holden M.T.G."/>
            <person name="Churcher C.M."/>
            <person name="Bentley S.D."/>
            <person name="Mungall K.L."/>
            <person name="Cerdeno-Tarraga A.-M."/>
            <person name="Temple L."/>
            <person name="James K.D."/>
            <person name="Harris B."/>
            <person name="Quail M.A."/>
            <person name="Achtman M."/>
            <person name="Atkin R."/>
            <person name="Baker S."/>
            <person name="Basham D."/>
            <person name="Bason N."/>
            <person name="Cherevach I."/>
            <person name="Chillingworth T."/>
            <person name="Collins M."/>
            <person name="Cronin A."/>
            <person name="Davis P."/>
            <person name="Doggett J."/>
            <person name="Feltwell T."/>
            <person name="Goble A."/>
            <person name="Hamlin N."/>
            <person name="Hauser H."/>
            <person name="Holroyd S."/>
            <person name="Jagels K."/>
            <person name="Leather S."/>
            <person name="Moule S."/>
            <person name="Norberczak H."/>
            <person name="O'Neil S."/>
            <person name="Ormond D."/>
            <person name="Price C."/>
            <person name="Rabbinowitsch E."/>
            <person name="Rutter S."/>
            <person name="Sanders M."/>
            <person name="Saunders D."/>
            <person name="Seeger K."/>
            <person name="Sharp S."/>
            <person name="Simmonds M."/>
            <person name="Skelton J."/>
            <person name="Squares R."/>
            <person name="Squares S."/>
            <person name="Stevens K."/>
            <person name="Unwin L."/>
            <person name="Whitehead S."/>
            <person name="Barrell B.G."/>
            <person name="Maskell D.J."/>
        </authorList>
    </citation>
    <scope>NUCLEOTIDE SEQUENCE [LARGE SCALE GENOMIC DNA]</scope>
    <source>
        <strain>ATCC BAA-588 / NCTC 13252 / RB50</strain>
    </source>
</reference>
<sequence length="275" mass="30189">MALVKVKPTSAGRRGMVKVVSPKLHKGAPHAALLEKKTRGSGRNNNGHITVRHRGGGHKQHYRVVDFRRNKDGIPAKVERLEYDPNRTAHIALLCYADGERRYIIAPRGLEVGATLISGIEAPIRAGNTLPIRNIPVGTTIHCIEMIPGKGAQMARSAGASAVLMAREGTYAQVRLRSGEVRRVHIQCRATIGEVGNEEHSLRQIGKAGAMRWRGVRPTVRGVAMNPIDHPHGGGEGRTGEAREPVSPWGTPAKGFKTRRNKRTNNMIVQRRKRK</sequence>
<comment type="function">
    <text evidence="1">One of the primary rRNA binding proteins. Required for association of the 30S and 50S subunits to form the 70S ribosome, for tRNA binding and peptide bond formation. It has been suggested to have peptidyltransferase activity; this is somewhat controversial. Makes several contacts with the 16S rRNA in the 70S ribosome.</text>
</comment>
<comment type="subunit">
    <text evidence="1">Part of the 50S ribosomal subunit. Forms a bridge to the 30S subunit in the 70S ribosome.</text>
</comment>
<comment type="similarity">
    <text evidence="1">Belongs to the universal ribosomal protein uL2 family.</text>
</comment>
<proteinExistence type="inferred from homology"/>
<dbReference type="EMBL" id="BX640437">
    <property type="protein sequence ID" value="CAE30534.1"/>
    <property type="molecule type" value="Genomic_DNA"/>
</dbReference>
<dbReference type="RefSeq" id="WP_003806907.1">
    <property type="nucleotide sequence ID" value="NC_002927.3"/>
</dbReference>
<dbReference type="SMR" id="Q7WRC2"/>
<dbReference type="GeneID" id="93206261"/>
<dbReference type="KEGG" id="bbr:BB0032"/>
<dbReference type="eggNOG" id="COG0090">
    <property type="taxonomic scope" value="Bacteria"/>
</dbReference>
<dbReference type="HOGENOM" id="CLU_036235_2_1_4"/>
<dbReference type="Proteomes" id="UP000001027">
    <property type="component" value="Chromosome"/>
</dbReference>
<dbReference type="GO" id="GO:0015934">
    <property type="term" value="C:large ribosomal subunit"/>
    <property type="evidence" value="ECO:0007669"/>
    <property type="project" value="InterPro"/>
</dbReference>
<dbReference type="GO" id="GO:0019843">
    <property type="term" value="F:rRNA binding"/>
    <property type="evidence" value="ECO:0007669"/>
    <property type="project" value="UniProtKB-UniRule"/>
</dbReference>
<dbReference type="GO" id="GO:0003735">
    <property type="term" value="F:structural constituent of ribosome"/>
    <property type="evidence" value="ECO:0007669"/>
    <property type="project" value="InterPro"/>
</dbReference>
<dbReference type="GO" id="GO:0016740">
    <property type="term" value="F:transferase activity"/>
    <property type="evidence" value="ECO:0007669"/>
    <property type="project" value="InterPro"/>
</dbReference>
<dbReference type="GO" id="GO:0002181">
    <property type="term" value="P:cytoplasmic translation"/>
    <property type="evidence" value="ECO:0007669"/>
    <property type="project" value="TreeGrafter"/>
</dbReference>
<dbReference type="FunFam" id="2.30.30.30:FF:000001">
    <property type="entry name" value="50S ribosomal protein L2"/>
    <property type="match status" value="1"/>
</dbReference>
<dbReference type="FunFam" id="2.40.50.140:FF:000003">
    <property type="entry name" value="50S ribosomal protein L2"/>
    <property type="match status" value="1"/>
</dbReference>
<dbReference type="FunFam" id="4.10.950.10:FF:000001">
    <property type="entry name" value="50S ribosomal protein L2"/>
    <property type="match status" value="1"/>
</dbReference>
<dbReference type="Gene3D" id="2.30.30.30">
    <property type="match status" value="1"/>
</dbReference>
<dbReference type="Gene3D" id="2.40.50.140">
    <property type="entry name" value="Nucleic acid-binding proteins"/>
    <property type="match status" value="1"/>
</dbReference>
<dbReference type="Gene3D" id="4.10.950.10">
    <property type="entry name" value="Ribosomal protein L2, domain 3"/>
    <property type="match status" value="1"/>
</dbReference>
<dbReference type="HAMAP" id="MF_01320_B">
    <property type="entry name" value="Ribosomal_uL2_B"/>
    <property type="match status" value="1"/>
</dbReference>
<dbReference type="InterPro" id="IPR012340">
    <property type="entry name" value="NA-bd_OB-fold"/>
</dbReference>
<dbReference type="InterPro" id="IPR014722">
    <property type="entry name" value="Rib_uL2_dom2"/>
</dbReference>
<dbReference type="InterPro" id="IPR002171">
    <property type="entry name" value="Ribosomal_uL2"/>
</dbReference>
<dbReference type="InterPro" id="IPR005880">
    <property type="entry name" value="Ribosomal_uL2_bac/org-type"/>
</dbReference>
<dbReference type="InterPro" id="IPR022669">
    <property type="entry name" value="Ribosomal_uL2_C"/>
</dbReference>
<dbReference type="InterPro" id="IPR022671">
    <property type="entry name" value="Ribosomal_uL2_CS"/>
</dbReference>
<dbReference type="InterPro" id="IPR014726">
    <property type="entry name" value="Ribosomal_uL2_dom3"/>
</dbReference>
<dbReference type="InterPro" id="IPR022666">
    <property type="entry name" value="Ribosomal_uL2_RNA-bd_dom"/>
</dbReference>
<dbReference type="InterPro" id="IPR008991">
    <property type="entry name" value="Translation_prot_SH3-like_sf"/>
</dbReference>
<dbReference type="NCBIfam" id="TIGR01171">
    <property type="entry name" value="rplB_bact"/>
    <property type="match status" value="1"/>
</dbReference>
<dbReference type="PANTHER" id="PTHR13691:SF5">
    <property type="entry name" value="LARGE RIBOSOMAL SUBUNIT PROTEIN UL2M"/>
    <property type="match status" value="1"/>
</dbReference>
<dbReference type="PANTHER" id="PTHR13691">
    <property type="entry name" value="RIBOSOMAL PROTEIN L2"/>
    <property type="match status" value="1"/>
</dbReference>
<dbReference type="Pfam" id="PF00181">
    <property type="entry name" value="Ribosomal_L2"/>
    <property type="match status" value="1"/>
</dbReference>
<dbReference type="Pfam" id="PF03947">
    <property type="entry name" value="Ribosomal_L2_C"/>
    <property type="match status" value="1"/>
</dbReference>
<dbReference type="PIRSF" id="PIRSF002158">
    <property type="entry name" value="Ribosomal_L2"/>
    <property type="match status" value="1"/>
</dbReference>
<dbReference type="SMART" id="SM01383">
    <property type="entry name" value="Ribosomal_L2"/>
    <property type="match status" value="1"/>
</dbReference>
<dbReference type="SMART" id="SM01382">
    <property type="entry name" value="Ribosomal_L2_C"/>
    <property type="match status" value="1"/>
</dbReference>
<dbReference type="SUPFAM" id="SSF50249">
    <property type="entry name" value="Nucleic acid-binding proteins"/>
    <property type="match status" value="1"/>
</dbReference>
<dbReference type="SUPFAM" id="SSF50104">
    <property type="entry name" value="Translation proteins SH3-like domain"/>
    <property type="match status" value="1"/>
</dbReference>
<dbReference type="PROSITE" id="PS00467">
    <property type="entry name" value="RIBOSOMAL_L2"/>
    <property type="match status" value="1"/>
</dbReference>
<gene>
    <name evidence="1" type="primary">rplB</name>
    <name type="ordered locus">BB0032</name>
</gene>
<protein>
    <recommendedName>
        <fullName evidence="1">Large ribosomal subunit protein uL2</fullName>
    </recommendedName>
    <alternativeName>
        <fullName evidence="3">50S ribosomal protein L2</fullName>
    </alternativeName>
</protein>
<organism>
    <name type="scientific">Bordetella bronchiseptica (strain ATCC BAA-588 / NCTC 13252 / RB50)</name>
    <name type="common">Alcaligenes bronchisepticus</name>
    <dbReference type="NCBI Taxonomy" id="257310"/>
    <lineage>
        <taxon>Bacteria</taxon>
        <taxon>Pseudomonadati</taxon>
        <taxon>Pseudomonadota</taxon>
        <taxon>Betaproteobacteria</taxon>
        <taxon>Burkholderiales</taxon>
        <taxon>Alcaligenaceae</taxon>
        <taxon>Bordetella</taxon>
    </lineage>
</organism>
<name>RL2_BORBR</name>